<keyword id="KW-0030">Aminoacyl-tRNA synthetase</keyword>
<keyword id="KW-0067">ATP-binding</keyword>
<keyword id="KW-0963">Cytoplasm</keyword>
<keyword id="KW-0436">Ligase</keyword>
<keyword id="KW-0547">Nucleotide-binding</keyword>
<keyword id="KW-0648">Protein biosynthesis</keyword>
<name>SYH_DEIGD</name>
<evidence type="ECO:0000255" key="1">
    <source>
        <dbReference type="HAMAP-Rule" id="MF_00127"/>
    </source>
</evidence>
<evidence type="ECO:0000256" key="2">
    <source>
        <dbReference type="SAM" id="MobiDB-lite"/>
    </source>
</evidence>
<reference key="1">
    <citation type="submission" date="2006-04" db="EMBL/GenBank/DDBJ databases">
        <title>Complete sequence of chromosome of Deinococcus geothermalis DSM 11300.</title>
        <authorList>
            <person name="Copeland A."/>
            <person name="Lucas S."/>
            <person name="Lapidus A."/>
            <person name="Barry K."/>
            <person name="Detter J.C."/>
            <person name="Glavina del Rio T."/>
            <person name="Hammon N."/>
            <person name="Israni S."/>
            <person name="Dalin E."/>
            <person name="Tice H."/>
            <person name="Pitluck S."/>
            <person name="Brettin T."/>
            <person name="Bruce D."/>
            <person name="Han C."/>
            <person name="Tapia R."/>
            <person name="Saunders E."/>
            <person name="Gilna P."/>
            <person name="Schmutz J."/>
            <person name="Larimer F."/>
            <person name="Land M."/>
            <person name="Hauser L."/>
            <person name="Kyrpides N."/>
            <person name="Kim E."/>
            <person name="Daly M.J."/>
            <person name="Fredrickson J.K."/>
            <person name="Makarova K.S."/>
            <person name="Gaidamakova E.K."/>
            <person name="Zhai M."/>
            <person name="Richardson P."/>
        </authorList>
    </citation>
    <scope>NUCLEOTIDE SEQUENCE [LARGE SCALE GENOMIC DNA]</scope>
    <source>
        <strain>DSM 11300 / CIP 105573 / AG-3a</strain>
    </source>
</reference>
<organism>
    <name type="scientific">Deinococcus geothermalis (strain DSM 11300 / CIP 105573 / AG-3a)</name>
    <dbReference type="NCBI Taxonomy" id="319795"/>
    <lineage>
        <taxon>Bacteria</taxon>
        <taxon>Thermotogati</taxon>
        <taxon>Deinococcota</taxon>
        <taxon>Deinococci</taxon>
        <taxon>Deinococcales</taxon>
        <taxon>Deinococcaceae</taxon>
        <taxon>Deinococcus</taxon>
    </lineage>
</organism>
<protein>
    <recommendedName>
        <fullName evidence="1">Histidine--tRNA ligase</fullName>
        <ecNumber evidence="1">6.1.1.21</ecNumber>
    </recommendedName>
    <alternativeName>
        <fullName evidence="1">Histidyl-tRNA synthetase</fullName>
        <shortName evidence="1">HisRS</shortName>
    </alternativeName>
</protein>
<accession>Q1IZB5</accession>
<gene>
    <name evidence="1" type="primary">hisS</name>
    <name type="ordered locus">Dgeo_1121</name>
</gene>
<sequence length="431" mass="47430">MALQRPKGTQDHLPDGSPKLSRDVQASAFAYVQDTARRVLERAGAQFIATPLFEEAELVRRGVGGSTDIVRKEMFTVYYFGDHGGYVLRPEGTAGIVRAYLQNGLKQLPAPLKLWTHGPMFRAENVQKGRLRQFHQVDYEALGSADPLVDAEAIWLMWEVVRELGLTGVRVKLGSIGDPADREAYNAYLRDCFTPHAARLSDDSRDRLTRNPMRILDSKSTGDQALIGELQVKPMLDFLGEAASSHFAAVQAYLRAWNVPFDIDPAIVRGLDYYRRTAWELHHQGVGAKSALGGGGRYDGLSTQLGGPEVPGIGWAFGIERLLLALEAEGVTFPEESGPLLFLAALDEEHVARAAGLALEGRRVARVEFAYRALKPANAFKEADRRRARYAGLLGSDEAERGVLTIKHLASGEQQEVPLAALNTFLAERAR</sequence>
<dbReference type="EC" id="6.1.1.21" evidence="1"/>
<dbReference type="EMBL" id="CP000359">
    <property type="protein sequence ID" value="ABF45419.1"/>
    <property type="molecule type" value="Genomic_DNA"/>
</dbReference>
<dbReference type="RefSeq" id="WP_011530256.1">
    <property type="nucleotide sequence ID" value="NC_008025.1"/>
</dbReference>
<dbReference type="SMR" id="Q1IZB5"/>
<dbReference type="STRING" id="319795.Dgeo_1121"/>
<dbReference type="KEGG" id="dge:Dgeo_1121"/>
<dbReference type="eggNOG" id="COG0124">
    <property type="taxonomic scope" value="Bacteria"/>
</dbReference>
<dbReference type="HOGENOM" id="CLU_025113_1_1_0"/>
<dbReference type="Proteomes" id="UP000002431">
    <property type="component" value="Chromosome"/>
</dbReference>
<dbReference type="GO" id="GO:0005737">
    <property type="term" value="C:cytoplasm"/>
    <property type="evidence" value="ECO:0007669"/>
    <property type="project" value="UniProtKB-SubCell"/>
</dbReference>
<dbReference type="GO" id="GO:0005524">
    <property type="term" value="F:ATP binding"/>
    <property type="evidence" value="ECO:0007669"/>
    <property type="project" value="UniProtKB-UniRule"/>
</dbReference>
<dbReference type="GO" id="GO:0004821">
    <property type="term" value="F:histidine-tRNA ligase activity"/>
    <property type="evidence" value="ECO:0007669"/>
    <property type="project" value="UniProtKB-UniRule"/>
</dbReference>
<dbReference type="GO" id="GO:0006427">
    <property type="term" value="P:histidyl-tRNA aminoacylation"/>
    <property type="evidence" value="ECO:0007669"/>
    <property type="project" value="UniProtKB-UniRule"/>
</dbReference>
<dbReference type="CDD" id="cd00773">
    <property type="entry name" value="HisRS-like_core"/>
    <property type="match status" value="1"/>
</dbReference>
<dbReference type="Gene3D" id="3.40.50.800">
    <property type="entry name" value="Anticodon-binding domain"/>
    <property type="match status" value="1"/>
</dbReference>
<dbReference type="Gene3D" id="3.30.930.10">
    <property type="entry name" value="Bira Bifunctional Protein, Domain 2"/>
    <property type="match status" value="1"/>
</dbReference>
<dbReference type="HAMAP" id="MF_00127">
    <property type="entry name" value="His_tRNA_synth"/>
    <property type="match status" value="1"/>
</dbReference>
<dbReference type="InterPro" id="IPR006195">
    <property type="entry name" value="aa-tRNA-synth_II"/>
</dbReference>
<dbReference type="InterPro" id="IPR045864">
    <property type="entry name" value="aa-tRNA-synth_II/BPL/LPL"/>
</dbReference>
<dbReference type="InterPro" id="IPR004154">
    <property type="entry name" value="Anticodon-bd"/>
</dbReference>
<dbReference type="InterPro" id="IPR036621">
    <property type="entry name" value="Anticodon-bd_dom_sf"/>
</dbReference>
<dbReference type="InterPro" id="IPR015807">
    <property type="entry name" value="His-tRNA-ligase"/>
</dbReference>
<dbReference type="InterPro" id="IPR041715">
    <property type="entry name" value="HisRS-like_core"/>
</dbReference>
<dbReference type="InterPro" id="IPR004516">
    <property type="entry name" value="HisRS/HisZ"/>
</dbReference>
<dbReference type="NCBIfam" id="TIGR00442">
    <property type="entry name" value="hisS"/>
    <property type="match status" value="1"/>
</dbReference>
<dbReference type="PANTHER" id="PTHR43707:SF1">
    <property type="entry name" value="HISTIDINE--TRNA LIGASE, MITOCHONDRIAL-RELATED"/>
    <property type="match status" value="1"/>
</dbReference>
<dbReference type="PANTHER" id="PTHR43707">
    <property type="entry name" value="HISTIDYL-TRNA SYNTHETASE"/>
    <property type="match status" value="1"/>
</dbReference>
<dbReference type="Pfam" id="PF03129">
    <property type="entry name" value="HGTP_anticodon"/>
    <property type="match status" value="1"/>
</dbReference>
<dbReference type="Pfam" id="PF13393">
    <property type="entry name" value="tRNA-synt_His"/>
    <property type="match status" value="1"/>
</dbReference>
<dbReference type="PIRSF" id="PIRSF001549">
    <property type="entry name" value="His-tRNA_synth"/>
    <property type="match status" value="1"/>
</dbReference>
<dbReference type="SUPFAM" id="SSF52954">
    <property type="entry name" value="Class II aaRS ABD-related"/>
    <property type="match status" value="1"/>
</dbReference>
<dbReference type="SUPFAM" id="SSF55681">
    <property type="entry name" value="Class II aaRS and biotin synthetases"/>
    <property type="match status" value="1"/>
</dbReference>
<dbReference type="PROSITE" id="PS50862">
    <property type="entry name" value="AA_TRNA_LIGASE_II"/>
    <property type="match status" value="1"/>
</dbReference>
<proteinExistence type="inferred from homology"/>
<comment type="catalytic activity">
    <reaction evidence="1">
        <text>tRNA(His) + L-histidine + ATP = L-histidyl-tRNA(His) + AMP + diphosphate + H(+)</text>
        <dbReference type="Rhea" id="RHEA:17313"/>
        <dbReference type="Rhea" id="RHEA-COMP:9665"/>
        <dbReference type="Rhea" id="RHEA-COMP:9689"/>
        <dbReference type="ChEBI" id="CHEBI:15378"/>
        <dbReference type="ChEBI" id="CHEBI:30616"/>
        <dbReference type="ChEBI" id="CHEBI:33019"/>
        <dbReference type="ChEBI" id="CHEBI:57595"/>
        <dbReference type="ChEBI" id="CHEBI:78442"/>
        <dbReference type="ChEBI" id="CHEBI:78527"/>
        <dbReference type="ChEBI" id="CHEBI:456215"/>
        <dbReference type="EC" id="6.1.1.21"/>
    </reaction>
</comment>
<comment type="subunit">
    <text evidence="1">Homodimer.</text>
</comment>
<comment type="subcellular location">
    <subcellularLocation>
        <location evidence="1">Cytoplasm</location>
    </subcellularLocation>
</comment>
<comment type="similarity">
    <text evidence="1">Belongs to the class-II aminoacyl-tRNA synthetase family.</text>
</comment>
<feature type="chain" id="PRO_1000016351" description="Histidine--tRNA ligase">
    <location>
        <begin position="1"/>
        <end position="431"/>
    </location>
</feature>
<feature type="region of interest" description="Disordered" evidence="2">
    <location>
        <begin position="1"/>
        <end position="20"/>
    </location>
</feature>